<sequence>MDGQPITGGVHPTENLNAEHHDFIKAALNETGTHAGRKYKVLRSSQQVVAGMKYTFYIVFEDDESGQEYKITAWSRPWLQDKGEALKLTFDKHEPK</sequence>
<dbReference type="RefSeq" id="XP_021694027.1">
    <property type="nucleotide sequence ID" value="XM_021838335.1"/>
</dbReference>
<dbReference type="RefSeq" id="XP_021694028.1">
    <property type="nucleotide sequence ID" value="XM_021838336.1"/>
</dbReference>
<dbReference type="SMR" id="A0A6I8TMQ9"/>
<dbReference type="FunCoup" id="A0A6I8TMQ9">
    <property type="interactions" value="3"/>
</dbReference>
<dbReference type="EnsemblMetazoa" id="AAEL013287-RC">
    <property type="protein sequence ID" value="AAEL013287-PC"/>
    <property type="gene ID" value="AAEL013287"/>
</dbReference>
<dbReference type="EnsemblMetazoa" id="AAEL013287-RD">
    <property type="protein sequence ID" value="AAEL013287-PD"/>
    <property type="gene ID" value="AAEL013287"/>
</dbReference>
<dbReference type="GeneID" id="5577582"/>
<dbReference type="InParanoid" id="A0A6I8TMQ9"/>
<dbReference type="OrthoDB" id="6357437at2759"/>
<dbReference type="Proteomes" id="UP000008820">
    <property type="component" value="Chromosome 1"/>
</dbReference>
<dbReference type="GO" id="GO:0004869">
    <property type="term" value="F:cysteine-type endopeptidase inhibitor activity"/>
    <property type="evidence" value="ECO:0007669"/>
    <property type="project" value="UniProtKB-KW"/>
</dbReference>
<dbReference type="CDD" id="cd00042">
    <property type="entry name" value="CY"/>
    <property type="match status" value="1"/>
</dbReference>
<dbReference type="Gene3D" id="3.10.450.10">
    <property type="match status" value="1"/>
</dbReference>
<dbReference type="InterPro" id="IPR000010">
    <property type="entry name" value="Cystatin_dom"/>
</dbReference>
<dbReference type="InterPro" id="IPR046350">
    <property type="entry name" value="Cystatin_sf"/>
</dbReference>
<dbReference type="Pfam" id="PF00031">
    <property type="entry name" value="Cystatin"/>
    <property type="match status" value="1"/>
</dbReference>
<dbReference type="SUPFAM" id="SSF54403">
    <property type="entry name" value="Cystatin/monellin"/>
    <property type="match status" value="1"/>
</dbReference>
<keyword id="KW-0325">Glycoprotein</keyword>
<keyword id="KW-0646">Protease inhibitor</keyword>
<keyword id="KW-1185">Reference proteome</keyword>
<keyword id="KW-0789">Thiol protease inhibitor</keyword>
<accession>A0A6I8TMQ9</accession>
<evidence type="ECO:0000255" key="1"/>
<evidence type="ECO:0000255" key="2">
    <source>
        <dbReference type="PROSITE-ProRule" id="PRU00498"/>
    </source>
</evidence>
<evidence type="ECO:0000269" key="3">
    <source>
    </source>
</evidence>
<evidence type="ECO:0000269" key="4">
    <source>
    </source>
</evidence>
<evidence type="ECO:0000303" key="5">
    <source>
    </source>
</evidence>
<evidence type="ECO:0000305" key="6"/>
<evidence type="ECO:0000312" key="7">
    <source>
        <dbReference type="Proteomes" id="UP000008820"/>
    </source>
</evidence>
<organism evidence="7">
    <name type="scientific">Aedes aegypti</name>
    <name type="common">Yellowfever mosquito</name>
    <name type="synonym">Culex aegypti</name>
    <dbReference type="NCBI Taxonomy" id="7159"/>
    <lineage>
        <taxon>Eukaryota</taxon>
        <taxon>Metazoa</taxon>
        <taxon>Ecdysozoa</taxon>
        <taxon>Arthropoda</taxon>
        <taxon>Hexapoda</taxon>
        <taxon>Insecta</taxon>
        <taxon>Pterygota</taxon>
        <taxon>Neoptera</taxon>
        <taxon>Endopterygota</taxon>
        <taxon>Diptera</taxon>
        <taxon>Nematocera</taxon>
        <taxon>Culicoidea</taxon>
        <taxon>Culicidae</taxon>
        <taxon>Culicinae</taxon>
        <taxon>Aedini</taxon>
        <taxon>Aedes</taxon>
        <taxon>Stegomyia</taxon>
    </lineage>
</organism>
<name>CYT_AEDAE</name>
<proteinExistence type="evidence at protein level"/>
<reference evidence="7" key="1">
    <citation type="journal article" date="2018" name="Nature">
        <title>Improved reference genome of Aedes aegypti informs arbovirus vector control.</title>
        <authorList>
            <person name="Matthews B.J."/>
            <person name="Dudchenko O."/>
            <person name="Kingan S.B."/>
            <person name="Koren S."/>
            <person name="Antoshechkin I."/>
            <person name="Crawford J.E."/>
            <person name="Glassford W.J."/>
            <person name="Herre M."/>
            <person name="Redmond S.N."/>
            <person name="Rose N.H."/>
            <person name="Weedall G.D."/>
            <person name="Wu Y."/>
            <person name="Batra S.S."/>
            <person name="Brito-Sierra C.A."/>
            <person name="Buckingham S.D."/>
            <person name="Campbell C.L."/>
            <person name="Chan S."/>
            <person name="Cox E."/>
            <person name="Evans B.R."/>
            <person name="Fansiri T."/>
            <person name="Filipovic I."/>
            <person name="Fontaine A."/>
            <person name="Gloria-Soria A."/>
            <person name="Hall R."/>
            <person name="Joardar V.S."/>
            <person name="Jones A.K."/>
            <person name="Kay R.G.G."/>
            <person name="Kodali V.K."/>
            <person name="Lee J."/>
            <person name="Lycett G.J."/>
            <person name="Mitchell S.N."/>
            <person name="Muehling J."/>
            <person name="Murphy M.R."/>
            <person name="Omer A.D."/>
            <person name="Partridge F.A."/>
            <person name="Peluso P."/>
            <person name="Aiden A.P."/>
            <person name="Ramasamy V."/>
            <person name="Rasic G."/>
            <person name="Roy S."/>
            <person name="Saavedra-Rodriguez K."/>
            <person name="Sharan S."/>
            <person name="Sharma A."/>
            <person name="Smith M.L."/>
            <person name="Turner J."/>
            <person name="Weakley A.M."/>
            <person name="Zhao Z."/>
            <person name="Akbari O.S."/>
            <person name="Black W.C. IV"/>
            <person name="Cao H."/>
            <person name="Darby A.C."/>
            <person name="Hill C.A."/>
            <person name="Johnston J.S."/>
            <person name="Murphy T.D."/>
            <person name="Raikhel A.S."/>
            <person name="Sattelle D.B."/>
            <person name="Sharakhov I.V."/>
            <person name="White B.J."/>
            <person name="Zhao L."/>
            <person name="Aiden E.L."/>
            <person name="Mann R.S."/>
            <person name="Lambrechts L."/>
            <person name="Powell J.R."/>
            <person name="Sharakhova M.V."/>
            <person name="Tu Z."/>
            <person name="Robertson H.M."/>
            <person name="McBride C.S."/>
            <person name="Hastie A.R."/>
            <person name="Korlach J."/>
            <person name="Neafsey D.E."/>
            <person name="Phillippy A.M."/>
            <person name="Vosshall L.B."/>
        </authorList>
    </citation>
    <scope>NUCLEOTIDE SEQUENCE [LARGE SCALE GENOMIC DNA]</scope>
    <source>
        <strain evidence="7">LVP_AGWG</strain>
    </source>
</reference>
<reference evidence="6" key="2">
    <citation type="journal article" date="2012" name="PLoS Pathog.">
        <title>Dengue virus infection of the Aedes aegypti salivary gland and chemosensory apparatus induces genes that modulate infection and blood-feeding behavior.</title>
        <authorList>
            <person name="Sim S."/>
            <person name="Ramirez J.L."/>
            <person name="Dimopoulos G."/>
        </authorList>
    </citation>
    <scope>FUNCTION (MICROBIAL INFECTION)</scope>
    <scope>INDUCTION (MICROBIAL INFECTION)</scope>
    <scope>DISRUPTION PHENOTYPE (MICROBIAL INFECTION)</scope>
</reference>
<reference evidence="6" key="3">
    <citation type="journal article" date="2020" name="Int. J. Biol. Macromol.">
        <title>The first characterization of a cystatin and a cathepsin L-like peptidase from Aedes aegypti and their possible role in DENV infection by the modulation of apoptosis.</title>
        <authorList>
            <person name="Oliveira F.A.A."/>
            <person name="Buri M.V."/>
            <person name="Rodriguez B.L."/>
            <person name="Costa-da-Silva A.L."/>
            <person name="Araujo H.R.C."/>
            <person name="Capurro M.L."/>
            <person name="Lu S."/>
            <person name="Tanaka A.S."/>
        </authorList>
    </citation>
    <scope>FUNCTION</scope>
    <scope>INTERACTION WITH CATHEPSIN L-LIKE PEPTIDASE</scope>
    <scope>TISSUE SPECIFICITY</scope>
    <scope>INDUCTION BY APOPTOSIS</scope>
</reference>
<protein>
    <recommendedName>
        <fullName evidence="6">Cystatin</fullName>
    </recommendedName>
    <alternativeName>
        <fullName evidence="5">Aacystatin</fullName>
    </alternativeName>
</protein>
<comment type="function">
    <text evidence="4">Cysteine proteinase inhibitor (PubMed:31857170). Inhibits cathepsin L-like peptidase (PubMed:31857170). Increases cell viability following apoptosis induction by staurosporine (PubMed:31857170). Inhibits human cathepsin S (CTSS), human cathepsin L2 (CTSV), human cathepsin L (CTSL), human cathepsin B (CTSB) and papain (PubMed:31857170).</text>
</comment>
<comment type="function">
    <text evidence="3">(Microbial infection) Modulates dengue virus type 2 replication in salivary glands.</text>
</comment>
<comment type="subunit">
    <text evidence="4">Interacts with cathepsin L-like peptidase; the interaction results in inhibition of cathepsin L-like peptidase activity.</text>
</comment>
<comment type="tissue specificity">
    <text evidence="4">Salivary gland (PubMed:31857170). Midgut (PubMed:31857170).</text>
</comment>
<comment type="induction">
    <text evidence="4">Up-regulated following apoptosis induction by staurosporine.</text>
</comment>
<comment type="induction">
    <text evidence="3">(Microbial infection) Induced in salivary glands following dengue virus type 2 infection.</text>
</comment>
<comment type="disruption phenotype">
    <text evidence="3">(Microbial infection) RNAi-mediated knockdown results in increased titers of dengue virus type 2 in salivary glands but not in carcasses.</text>
</comment>
<comment type="miscellaneous">
    <text evidence="4">Negative correlation between cystatin transcription and titers of dengue virus type 2 is observed in infected mosquitoes.</text>
</comment>
<comment type="similarity">
    <text evidence="6">Belongs to the cystatin family.</text>
</comment>
<feature type="chain" id="PRO_0000461060" description="Cystatin">
    <location>
        <begin position="1"/>
        <end position="96"/>
    </location>
</feature>
<feature type="domain" description="Cystatin" evidence="1">
    <location>
        <begin position="22"/>
        <end position="65"/>
    </location>
</feature>
<feature type="glycosylation site" description="N-linked (GlcNAc...) asparagine" evidence="2">
    <location>
        <position position="29"/>
    </location>
</feature>